<proteinExistence type="inferred from homology"/>
<feature type="initiator methionine" description="Removed" evidence="1">
    <location>
        <position position="1"/>
    </location>
</feature>
<feature type="chain" id="PRO_0000166952" description="Glycine dehydrogenase (decarboxylating)">
    <location>
        <begin position="2"/>
        <end position="959"/>
    </location>
</feature>
<feature type="modified residue" description="N6-(pyridoxal phosphate)lysine" evidence="2">
    <location>
        <position position="708"/>
    </location>
</feature>
<dbReference type="EC" id="1.4.4.2" evidence="2"/>
<dbReference type="EMBL" id="AL590842">
    <property type="protein sequence ID" value="CAL19572.1"/>
    <property type="molecule type" value="Genomic_DNA"/>
</dbReference>
<dbReference type="EMBL" id="AE009952">
    <property type="protein sequence ID" value="AAM86842.1"/>
    <property type="molecule type" value="Genomic_DNA"/>
</dbReference>
<dbReference type="EMBL" id="AE017042">
    <property type="protein sequence ID" value="AAS63752.1"/>
    <property type="molecule type" value="Genomic_DNA"/>
</dbReference>
<dbReference type="PIR" id="AB0111">
    <property type="entry name" value="AB0111"/>
</dbReference>
<dbReference type="RefSeq" id="WP_002209947.1">
    <property type="nucleotide sequence ID" value="NZ_WUCM01000038.1"/>
</dbReference>
<dbReference type="RefSeq" id="YP_002345953.1">
    <property type="nucleotide sequence ID" value="NC_003143.1"/>
</dbReference>
<dbReference type="SMR" id="Q8ZHI8"/>
<dbReference type="IntAct" id="Q8ZHI8">
    <property type="interactions" value="7"/>
</dbReference>
<dbReference type="STRING" id="214092.YPO0905"/>
<dbReference type="PaxDb" id="214092-YPO0905"/>
<dbReference type="DNASU" id="1148239"/>
<dbReference type="EnsemblBacteria" id="AAS63752">
    <property type="protein sequence ID" value="AAS63752"/>
    <property type="gene ID" value="YP_3602"/>
</dbReference>
<dbReference type="GeneID" id="57973735"/>
<dbReference type="KEGG" id="ype:YPO0905"/>
<dbReference type="KEGG" id="ypk:y3292"/>
<dbReference type="KEGG" id="ypm:YP_3602"/>
<dbReference type="PATRIC" id="fig|214092.21.peg.1179"/>
<dbReference type="eggNOG" id="COG0403">
    <property type="taxonomic scope" value="Bacteria"/>
</dbReference>
<dbReference type="eggNOG" id="COG1003">
    <property type="taxonomic scope" value="Bacteria"/>
</dbReference>
<dbReference type="HOGENOM" id="CLU_004620_3_2_6"/>
<dbReference type="OMA" id="RNLICTC"/>
<dbReference type="OrthoDB" id="9801272at2"/>
<dbReference type="Proteomes" id="UP000000815">
    <property type="component" value="Chromosome"/>
</dbReference>
<dbReference type="Proteomes" id="UP000001019">
    <property type="component" value="Chromosome"/>
</dbReference>
<dbReference type="Proteomes" id="UP000002490">
    <property type="component" value="Chromosome"/>
</dbReference>
<dbReference type="GO" id="GO:0005829">
    <property type="term" value="C:cytosol"/>
    <property type="evidence" value="ECO:0000318"/>
    <property type="project" value="GO_Central"/>
</dbReference>
<dbReference type="GO" id="GO:0005960">
    <property type="term" value="C:glycine cleavage complex"/>
    <property type="evidence" value="ECO:0000318"/>
    <property type="project" value="GO_Central"/>
</dbReference>
<dbReference type="GO" id="GO:0016594">
    <property type="term" value="F:glycine binding"/>
    <property type="evidence" value="ECO:0000318"/>
    <property type="project" value="GO_Central"/>
</dbReference>
<dbReference type="GO" id="GO:0004375">
    <property type="term" value="F:glycine dehydrogenase (decarboxylating) activity"/>
    <property type="evidence" value="ECO:0000318"/>
    <property type="project" value="GO_Central"/>
</dbReference>
<dbReference type="GO" id="GO:0030170">
    <property type="term" value="F:pyridoxal phosphate binding"/>
    <property type="evidence" value="ECO:0000318"/>
    <property type="project" value="GO_Central"/>
</dbReference>
<dbReference type="GO" id="GO:0019464">
    <property type="term" value="P:glycine decarboxylation via glycine cleavage system"/>
    <property type="evidence" value="ECO:0000318"/>
    <property type="project" value="GO_Central"/>
</dbReference>
<dbReference type="CDD" id="cd00613">
    <property type="entry name" value="GDC-P"/>
    <property type="match status" value="2"/>
</dbReference>
<dbReference type="FunFam" id="3.40.640.10:FF:000005">
    <property type="entry name" value="Glycine dehydrogenase (decarboxylating), mitochondrial"/>
    <property type="match status" value="1"/>
</dbReference>
<dbReference type="FunFam" id="3.90.1150.10:FF:000007">
    <property type="entry name" value="Glycine dehydrogenase (decarboxylating), mitochondrial"/>
    <property type="match status" value="1"/>
</dbReference>
<dbReference type="FunFam" id="3.40.640.10:FF:000007">
    <property type="entry name" value="glycine dehydrogenase (Decarboxylating), mitochondrial"/>
    <property type="match status" value="1"/>
</dbReference>
<dbReference type="Gene3D" id="3.90.1150.10">
    <property type="entry name" value="Aspartate Aminotransferase, domain 1"/>
    <property type="match status" value="2"/>
</dbReference>
<dbReference type="Gene3D" id="3.40.640.10">
    <property type="entry name" value="Type I PLP-dependent aspartate aminotransferase-like (Major domain)"/>
    <property type="match status" value="2"/>
</dbReference>
<dbReference type="HAMAP" id="MF_00711">
    <property type="entry name" value="GcvP"/>
    <property type="match status" value="1"/>
</dbReference>
<dbReference type="InterPro" id="IPR003437">
    <property type="entry name" value="GcvP"/>
</dbReference>
<dbReference type="InterPro" id="IPR049316">
    <property type="entry name" value="GDC-P_C"/>
</dbReference>
<dbReference type="InterPro" id="IPR049315">
    <property type="entry name" value="GDC-P_N"/>
</dbReference>
<dbReference type="InterPro" id="IPR020581">
    <property type="entry name" value="GDC_P"/>
</dbReference>
<dbReference type="InterPro" id="IPR015424">
    <property type="entry name" value="PyrdxlP-dep_Trfase"/>
</dbReference>
<dbReference type="InterPro" id="IPR015421">
    <property type="entry name" value="PyrdxlP-dep_Trfase_major"/>
</dbReference>
<dbReference type="InterPro" id="IPR015422">
    <property type="entry name" value="PyrdxlP-dep_Trfase_small"/>
</dbReference>
<dbReference type="NCBIfam" id="TIGR00461">
    <property type="entry name" value="gcvP"/>
    <property type="match status" value="1"/>
</dbReference>
<dbReference type="NCBIfam" id="NF003346">
    <property type="entry name" value="PRK04366.1"/>
    <property type="match status" value="1"/>
</dbReference>
<dbReference type="PANTHER" id="PTHR11773:SF13">
    <property type="entry name" value="GLYCINE DEHYDROGENASE (DECARBOXYLATING)"/>
    <property type="match status" value="1"/>
</dbReference>
<dbReference type="PANTHER" id="PTHR11773">
    <property type="entry name" value="GLYCINE DEHYDROGENASE, DECARBOXYLATING"/>
    <property type="match status" value="1"/>
</dbReference>
<dbReference type="Pfam" id="PF21478">
    <property type="entry name" value="GcvP2_C"/>
    <property type="match status" value="1"/>
</dbReference>
<dbReference type="Pfam" id="PF02347">
    <property type="entry name" value="GDC-P"/>
    <property type="match status" value="2"/>
</dbReference>
<dbReference type="SUPFAM" id="SSF53383">
    <property type="entry name" value="PLP-dependent transferases"/>
    <property type="match status" value="2"/>
</dbReference>
<organism>
    <name type="scientific">Yersinia pestis</name>
    <dbReference type="NCBI Taxonomy" id="632"/>
    <lineage>
        <taxon>Bacteria</taxon>
        <taxon>Pseudomonadati</taxon>
        <taxon>Pseudomonadota</taxon>
        <taxon>Gammaproteobacteria</taxon>
        <taxon>Enterobacterales</taxon>
        <taxon>Yersiniaceae</taxon>
        <taxon>Yersinia</taxon>
    </lineage>
</organism>
<name>GCSP_YERPE</name>
<accession>Q8ZHI8</accession>
<accession>Q0WID5</accession>
<protein>
    <recommendedName>
        <fullName evidence="2">Glycine dehydrogenase (decarboxylating)</fullName>
        <ecNumber evidence="2">1.4.4.2</ecNumber>
    </recommendedName>
    <alternativeName>
        <fullName evidence="2">Glycine cleavage system P-protein</fullName>
    </alternativeName>
    <alternativeName>
        <fullName evidence="2">Glycine decarboxylase</fullName>
    </alternativeName>
    <alternativeName>
        <fullName evidence="2">Glycine dehydrogenase (aminomethyl-transferring)</fullName>
    </alternativeName>
</protein>
<reference key="1">
    <citation type="journal article" date="2001" name="Nature">
        <title>Genome sequence of Yersinia pestis, the causative agent of plague.</title>
        <authorList>
            <person name="Parkhill J."/>
            <person name="Wren B.W."/>
            <person name="Thomson N.R."/>
            <person name="Titball R.W."/>
            <person name="Holden M.T.G."/>
            <person name="Prentice M.B."/>
            <person name="Sebaihia M."/>
            <person name="James K.D."/>
            <person name="Churcher C.M."/>
            <person name="Mungall K.L."/>
            <person name="Baker S."/>
            <person name="Basham D."/>
            <person name="Bentley S.D."/>
            <person name="Brooks K."/>
            <person name="Cerdeno-Tarraga A.-M."/>
            <person name="Chillingworth T."/>
            <person name="Cronin A."/>
            <person name="Davies R.M."/>
            <person name="Davis P."/>
            <person name="Dougan G."/>
            <person name="Feltwell T."/>
            <person name="Hamlin N."/>
            <person name="Holroyd S."/>
            <person name="Jagels K."/>
            <person name="Karlyshev A.V."/>
            <person name="Leather S."/>
            <person name="Moule S."/>
            <person name="Oyston P.C.F."/>
            <person name="Quail M.A."/>
            <person name="Rutherford K.M."/>
            <person name="Simmonds M."/>
            <person name="Skelton J."/>
            <person name="Stevens K."/>
            <person name="Whitehead S."/>
            <person name="Barrell B.G."/>
        </authorList>
    </citation>
    <scope>NUCLEOTIDE SEQUENCE [LARGE SCALE GENOMIC DNA]</scope>
    <source>
        <strain>CO-92 / Biovar Orientalis</strain>
    </source>
</reference>
<reference key="2">
    <citation type="journal article" date="2002" name="J. Bacteriol.">
        <title>Genome sequence of Yersinia pestis KIM.</title>
        <authorList>
            <person name="Deng W."/>
            <person name="Burland V."/>
            <person name="Plunkett G. III"/>
            <person name="Boutin A."/>
            <person name="Mayhew G.F."/>
            <person name="Liss P."/>
            <person name="Perna N.T."/>
            <person name="Rose D.J."/>
            <person name="Mau B."/>
            <person name="Zhou S."/>
            <person name="Schwartz D.C."/>
            <person name="Fetherston J.D."/>
            <person name="Lindler L.E."/>
            <person name="Brubaker R.R."/>
            <person name="Plano G.V."/>
            <person name="Straley S.C."/>
            <person name="McDonough K.A."/>
            <person name="Nilles M.L."/>
            <person name="Matson J.S."/>
            <person name="Blattner F.R."/>
            <person name="Perry R.D."/>
        </authorList>
    </citation>
    <scope>NUCLEOTIDE SEQUENCE [LARGE SCALE GENOMIC DNA]</scope>
    <source>
        <strain>KIM10+ / Biovar Mediaevalis</strain>
    </source>
</reference>
<reference key="3">
    <citation type="journal article" date="2004" name="DNA Res.">
        <title>Complete genome sequence of Yersinia pestis strain 91001, an isolate avirulent to humans.</title>
        <authorList>
            <person name="Song Y."/>
            <person name="Tong Z."/>
            <person name="Wang J."/>
            <person name="Wang L."/>
            <person name="Guo Z."/>
            <person name="Han Y."/>
            <person name="Zhang J."/>
            <person name="Pei D."/>
            <person name="Zhou D."/>
            <person name="Qin H."/>
            <person name="Pang X."/>
            <person name="Han Y."/>
            <person name="Zhai J."/>
            <person name="Li M."/>
            <person name="Cui B."/>
            <person name="Qi Z."/>
            <person name="Jin L."/>
            <person name="Dai R."/>
            <person name="Chen F."/>
            <person name="Li S."/>
            <person name="Ye C."/>
            <person name="Du Z."/>
            <person name="Lin W."/>
            <person name="Wang J."/>
            <person name="Yu J."/>
            <person name="Yang H."/>
            <person name="Wang J."/>
            <person name="Huang P."/>
            <person name="Yang R."/>
        </authorList>
    </citation>
    <scope>NUCLEOTIDE SEQUENCE [LARGE SCALE GENOMIC DNA]</scope>
    <source>
        <strain>91001 / Biovar Mediaevalis</strain>
    </source>
</reference>
<gene>
    <name evidence="2" type="primary">gcvP</name>
    <name type="ordered locus">YPO0905</name>
    <name type="ordered locus">y3292</name>
    <name type="ordered locus">YP_3602</name>
</gene>
<sequence>MTQNLSQLEHNDAFIQRHIGSSVEQQQQMLAAVGASSLSTLIQQIVPADIQLPGPPPVGEAATEHQALAELKGIASQNQCYKSYIGMGYSPVLTPPVILRNMLENPGWYTAYTPYQPEVSQGRLEALLNFQQLTQDLTGLDLASASLLDEATAAAESMALAKRASKLKDANRFFVADDVHPQTLDVVLTRAETFGFDVIVDRAEKVLELDGIFGVLLQQVGTTGELHDYSALLAELKKRKIITSVAADIMALVLLTAPGAQGADVVFGSAQRFGVPMGYGGPHAAFFACRDEFKRSMPGRIIGVSRDAAGNTALRMAMQTREQHIRREKANSNICTSQVLLANIASLYAVYHGPQGLQRIAGRIHRMTDILAAGLQHAGLTLRFKHWFDTLTVEVKDKAAVLARALSFGINLRTDIHGAVGITLNETTSREDIQTLFALFVGDNHGLDIDQLDAAVSQHSQSIQDSMLRRDPILTHPVFNRYHSETEMMRYMHRLERKDLALNQAMIPLGSCTMKLNAAAEMIPITWPEFAELHPFCPPEQAAGYQQMIGQLSQWLVQLTGYDAVCMQPNSGAQGEYAGLLAIRRYHESRNQANRHICLIPSSAHGTNPASAQMAGMSVVVVACDKQGNIDLHDLRQKAEHAGDELSCIMVTYPSTHGVYEETIREVCQIVHQFGGQVYLDGANMNAQVGITTPGYIGADVSHLNLHKTFCIPHGGGGPGMGPIGVKAHLAPFVPGHSVVQIDGMTTQQGAVSAAPFGSASILPISWMYIRMMGADGLKQASQVAILNANYIATRLKNAYPVLYTGHDGRVAHECILDIRPLKEATGISEMDIAKRLIDFGFHAPTMSFPVAGTLMVEPTESESKVELDRFIDAMLAIRAEIEKVAQGEWPLEDNPLVNAPHTQAELVGEWTHPYSRELAVFPVAGVLENKYWPTVKRLDDVYGDRNLFCSCVPISDYE</sequence>
<comment type="function">
    <text evidence="2">The glycine cleavage system catalyzes the degradation of glycine. The P protein binds the alpha-amino group of glycine through its pyridoxal phosphate cofactor; CO(2) is released and the remaining methylamine moiety is then transferred to the lipoamide cofactor of the H protein.</text>
</comment>
<comment type="catalytic activity">
    <reaction evidence="2">
        <text>N(6)-[(R)-lipoyl]-L-lysyl-[glycine-cleavage complex H protein] + glycine + H(+) = N(6)-[(R)-S(8)-aminomethyldihydrolipoyl]-L-lysyl-[glycine-cleavage complex H protein] + CO2</text>
        <dbReference type="Rhea" id="RHEA:24304"/>
        <dbReference type="Rhea" id="RHEA-COMP:10494"/>
        <dbReference type="Rhea" id="RHEA-COMP:10495"/>
        <dbReference type="ChEBI" id="CHEBI:15378"/>
        <dbReference type="ChEBI" id="CHEBI:16526"/>
        <dbReference type="ChEBI" id="CHEBI:57305"/>
        <dbReference type="ChEBI" id="CHEBI:83099"/>
        <dbReference type="ChEBI" id="CHEBI:83143"/>
        <dbReference type="EC" id="1.4.4.2"/>
    </reaction>
</comment>
<comment type="cofactor">
    <cofactor evidence="2">
        <name>pyridoxal 5'-phosphate</name>
        <dbReference type="ChEBI" id="CHEBI:597326"/>
    </cofactor>
</comment>
<comment type="subunit">
    <text evidence="2">The glycine cleavage system is composed of four proteins: P, T, L and H.</text>
</comment>
<comment type="similarity">
    <text evidence="2">Belongs to the GcvP family.</text>
</comment>
<keyword id="KW-0560">Oxidoreductase</keyword>
<keyword id="KW-0663">Pyridoxal phosphate</keyword>
<keyword id="KW-1185">Reference proteome</keyword>
<evidence type="ECO:0000250" key="1"/>
<evidence type="ECO:0000255" key="2">
    <source>
        <dbReference type="HAMAP-Rule" id="MF_00711"/>
    </source>
</evidence>